<reference key="1">
    <citation type="journal article" date="2007" name="PLoS Genet.">
        <title>Patterns and implications of gene gain and loss in the evolution of Prochlorococcus.</title>
        <authorList>
            <person name="Kettler G.C."/>
            <person name="Martiny A.C."/>
            <person name="Huang K."/>
            <person name="Zucker J."/>
            <person name="Coleman M.L."/>
            <person name="Rodrigue S."/>
            <person name="Chen F."/>
            <person name="Lapidus A."/>
            <person name="Ferriera S."/>
            <person name="Johnson J."/>
            <person name="Steglich C."/>
            <person name="Church G.M."/>
            <person name="Richardson P."/>
            <person name="Chisholm S.W."/>
        </authorList>
    </citation>
    <scope>NUCLEOTIDE SEQUENCE [LARGE SCALE GENOMIC DNA]</scope>
    <source>
        <strain>AS9601</strain>
    </source>
</reference>
<gene>
    <name type="ordered locus">A9601_04941</name>
</gene>
<name>Y494_PROMS</name>
<comment type="similarity">
    <text evidence="1">Belongs to the UPF0284 family.</text>
</comment>
<dbReference type="EMBL" id="CP000551">
    <property type="protein sequence ID" value="ABM69782.1"/>
    <property type="molecule type" value="Genomic_DNA"/>
</dbReference>
<dbReference type="RefSeq" id="WP_011817950.1">
    <property type="nucleotide sequence ID" value="NC_008816.1"/>
</dbReference>
<dbReference type="SMR" id="A2BPS1"/>
<dbReference type="STRING" id="146891.A9601_04941"/>
<dbReference type="KEGG" id="pmb:A9601_04941"/>
<dbReference type="eggNOG" id="COG2038">
    <property type="taxonomic scope" value="Bacteria"/>
</dbReference>
<dbReference type="HOGENOM" id="CLU_053134_1_0_3"/>
<dbReference type="OrthoDB" id="418257at2"/>
<dbReference type="Proteomes" id="UP000002590">
    <property type="component" value="Chromosome"/>
</dbReference>
<dbReference type="GO" id="GO:0008939">
    <property type="term" value="F:nicotinate-nucleotide-dimethylbenzimidazole phosphoribosyltransferase activity"/>
    <property type="evidence" value="ECO:0007669"/>
    <property type="project" value="InterPro"/>
</dbReference>
<dbReference type="CDD" id="cd02439">
    <property type="entry name" value="DMB-PRT_CobT"/>
    <property type="match status" value="1"/>
</dbReference>
<dbReference type="Gene3D" id="3.40.50.10210">
    <property type="match status" value="1"/>
</dbReference>
<dbReference type="HAMAP" id="MF_01086">
    <property type="entry name" value="UPF0284"/>
    <property type="match status" value="1"/>
</dbReference>
<dbReference type="InterPro" id="IPR003200">
    <property type="entry name" value="Nict_dMeBzImd_PRibTrfase"/>
</dbReference>
<dbReference type="InterPro" id="IPR002805">
    <property type="entry name" value="Nict_dMeBzImd_PRibTrfase_arc"/>
</dbReference>
<dbReference type="InterPro" id="IPR036087">
    <property type="entry name" value="Nict_dMeBzImd_PRibTrfase_sf"/>
</dbReference>
<dbReference type="NCBIfam" id="TIGR00303">
    <property type="entry name" value="nicotinate mononucleotide-dependent phosphoribosyltransferase CobT"/>
    <property type="match status" value="1"/>
</dbReference>
<dbReference type="NCBIfam" id="NF003369">
    <property type="entry name" value="PRK04447.1-2"/>
    <property type="match status" value="1"/>
</dbReference>
<dbReference type="PANTHER" id="PTHR38811">
    <property type="match status" value="1"/>
</dbReference>
<dbReference type="PANTHER" id="PTHR38811:SF1">
    <property type="entry name" value="UPF0284 PROTEIN SLL1500"/>
    <property type="match status" value="1"/>
</dbReference>
<dbReference type="Pfam" id="PF02277">
    <property type="entry name" value="DBI_PRT"/>
    <property type="match status" value="1"/>
</dbReference>
<dbReference type="SUPFAM" id="SSF52733">
    <property type="entry name" value="Nicotinate mononucleotide:5,6-dimethylbenzimidazole phosphoribosyltransferase (CobT)"/>
    <property type="match status" value="1"/>
</dbReference>
<organism>
    <name type="scientific">Prochlorococcus marinus (strain AS9601)</name>
    <dbReference type="NCBI Taxonomy" id="146891"/>
    <lineage>
        <taxon>Bacteria</taxon>
        <taxon>Bacillati</taxon>
        <taxon>Cyanobacteriota</taxon>
        <taxon>Cyanophyceae</taxon>
        <taxon>Synechococcales</taxon>
        <taxon>Prochlorococcaceae</taxon>
        <taxon>Prochlorococcus</taxon>
    </lineage>
</organism>
<accession>A2BPS1</accession>
<proteinExistence type="inferred from homology"/>
<evidence type="ECO:0000255" key="1">
    <source>
        <dbReference type="HAMAP-Rule" id="MF_01086"/>
    </source>
</evidence>
<protein>
    <recommendedName>
        <fullName evidence="1">UPF0284 protein A9601_04941</fullName>
    </recommendedName>
</protein>
<sequence length="385" mass="42130">MYSKELGINFFGNESNKKRQLNKIEILKKNIKNLKIFLIIAGTNTSQIPGISAAGINAKSRRKTALADAEFLLEGASKDHKYKLPLLNAGVTPALISHVCSKLINIYPVIVPLGIGAKPYFNHLDVEDRNLGPSNCLTTGKSMTKERVLNLYEKGLAIGKSLQQPVLISESVPGGTTTAQAVMEAFGLQVSNLVGSSLFKAPRELRRKVVKRGLFNANFKANFDSFDVVAAVGDPFQAFSMGLLIGARLAKQPVILSGGSQMLAIILLVLEFLDEKHKDEFIEDVFIATTGWLVKDNSLNDLVNLINEKYDVKLLGLASPLNFKSSKYKELRDYELGHVKEGVGAGGISLLAFLDGFKNEEIVSLCQLNLEMMKDLGQISLEKDC</sequence>
<feature type="chain" id="PRO_1000064866" description="UPF0284 protein A9601_04941">
    <location>
        <begin position="1"/>
        <end position="385"/>
    </location>
</feature>